<reference key="1">
    <citation type="journal article" date="2007" name="J. Bacteriol.">
        <title>Complete genome of acute rheumatic fever-associated serotype M5 Streptococcus pyogenes strain Manfredo.</title>
        <authorList>
            <person name="Holden M.T.G."/>
            <person name="Scott A."/>
            <person name="Cherevach I."/>
            <person name="Chillingworth T."/>
            <person name="Churcher C."/>
            <person name="Cronin A."/>
            <person name="Dowd L."/>
            <person name="Feltwell T."/>
            <person name="Hamlin N."/>
            <person name="Holroyd S."/>
            <person name="Jagels K."/>
            <person name="Moule S."/>
            <person name="Mungall K."/>
            <person name="Quail M.A."/>
            <person name="Price C."/>
            <person name="Rabbinowitsch E."/>
            <person name="Sharp S."/>
            <person name="Skelton J."/>
            <person name="Whitehead S."/>
            <person name="Barrell B.G."/>
            <person name="Kehoe M."/>
            <person name="Parkhill J."/>
        </authorList>
    </citation>
    <scope>NUCLEOTIDE SEQUENCE [LARGE SCALE GENOMIC DNA]</scope>
    <source>
        <strain>Manfredo</strain>
    </source>
</reference>
<evidence type="ECO:0000255" key="1">
    <source>
        <dbReference type="HAMAP-Rule" id="MF_01126"/>
    </source>
</evidence>
<feature type="chain" id="PRO_1000065372" description="UPF0298 protein SpyM51529">
    <location>
        <begin position="1"/>
        <end position="91"/>
    </location>
</feature>
<name>Y1529_STRPG</name>
<comment type="subcellular location">
    <subcellularLocation>
        <location evidence="1">Cytoplasm</location>
    </subcellularLocation>
</comment>
<comment type="similarity">
    <text evidence="1">Belongs to the UPF0298 family.</text>
</comment>
<proteinExistence type="inferred from homology"/>
<dbReference type="EMBL" id="AM295007">
    <property type="protein sequence ID" value="CAM30850.1"/>
    <property type="molecule type" value="Genomic_DNA"/>
</dbReference>
<dbReference type="RefSeq" id="WP_002985847.1">
    <property type="nucleotide sequence ID" value="NC_009332.1"/>
</dbReference>
<dbReference type="SMR" id="A2RG71"/>
<dbReference type="KEGG" id="spf:SpyM51529"/>
<dbReference type="HOGENOM" id="CLU_159890_1_0_9"/>
<dbReference type="GO" id="GO:0005737">
    <property type="term" value="C:cytoplasm"/>
    <property type="evidence" value="ECO:0007669"/>
    <property type="project" value="UniProtKB-SubCell"/>
</dbReference>
<dbReference type="HAMAP" id="MF_01126">
    <property type="entry name" value="UPF0298"/>
    <property type="match status" value="1"/>
</dbReference>
<dbReference type="InterPro" id="IPR016979">
    <property type="entry name" value="DUF2129"/>
</dbReference>
<dbReference type="NCBIfam" id="NF002631">
    <property type="entry name" value="PRK02302.1"/>
    <property type="match status" value="1"/>
</dbReference>
<dbReference type="Pfam" id="PF09902">
    <property type="entry name" value="DUF2129"/>
    <property type="match status" value="1"/>
</dbReference>
<dbReference type="PIRSF" id="PIRSF031653">
    <property type="entry name" value="UCP031653"/>
    <property type="match status" value="1"/>
</dbReference>
<accession>A2RG71</accession>
<gene>
    <name type="ordered locus">SpyM51529</name>
</gene>
<protein>
    <recommendedName>
        <fullName evidence="1">UPF0298 protein SpyM51529</fullName>
    </recommendedName>
</protein>
<organism>
    <name type="scientific">Streptococcus pyogenes serotype M5 (strain Manfredo)</name>
    <dbReference type="NCBI Taxonomy" id="160491"/>
    <lineage>
        <taxon>Bacteria</taxon>
        <taxon>Bacillati</taxon>
        <taxon>Bacillota</taxon>
        <taxon>Bacilli</taxon>
        <taxon>Lactobacillales</taxon>
        <taxon>Streptococcaceae</taxon>
        <taxon>Streptococcus</taxon>
    </lineage>
</organism>
<keyword id="KW-0963">Cytoplasm</keyword>
<sequence>MFQKQERIGLVVYLYYNRDARKLSKFGDLYYHSKRSRYLIIYINKNDLDTKLEEMRRLKCVKDIRPSAFDDIDRQFVGNLHRDETNNHQKG</sequence>